<name>RLME_NITMU</name>
<protein>
    <recommendedName>
        <fullName evidence="1">Ribosomal RNA large subunit methyltransferase E</fullName>
        <ecNumber evidence="1">2.1.1.166</ecNumber>
    </recommendedName>
    <alternativeName>
        <fullName evidence="1">23S rRNA Um2552 methyltransferase</fullName>
    </alternativeName>
    <alternativeName>
        <fullName evidence="1">rRNA (uridine-2'-O-)-methyltransferase</fullName>
    </alternativeName>
</protein>
<keyword id="KW-0963">Cytoplasm</keyword>
<keyword id="KW-0489">Methyltransferase</keyword>
<keyword id="KW-1185">Reference proteome</keyword>
<keyword id="KW-0698">rRNA processing</keyword>
<keyword id="KW-0949">S-adenosyl-L-methionine</keyword>
<keyword id="KW-0808">Transferase</keyword>
<feature type="chain" id="PRO_0000282768" description="Ribosomal RNA large subunit methyltransferase E">
    <location>
        <begin position="1"/>
        <end position="206"/>
    </location>
</feature>
<feature type="active site" description="Proton acceptor" evidence="1">
    <location>
        <position position="161"/>
    </location>
</feature>
<feature type="binding site" evidence="1">
    <location>
        <position position="60"/>
    </location>
    <ligand>
        <name>S-adenosyl-L-methionine</name>
        <dbReference type="ChEBI" id="CHEBI:59789"/>
    </ligand>
</feature>
<feature type="binding site" evidence="1">
    <location>
        <position position="62"/>
    </location>
    <ligand>
        <name>S-adenosyl-L-methionine</name>
        <dbReference type="ChEBI" id="CHEBI:59789"/>
    </ligand>
</feature>
<feature type="binding site" evidence="1">
    <location>
        <position position="80"/>
    </location>
    <ligand>
        <name>S-adenosyl-L-methionine</name>
        <dbReference type="ChEBI" id="CHEBI:59789"/>
    </ligand>
</feature>
<feature type="binding site" evidence="1">
    <location>
        <position position="96"/>
    </location>
    <ligand>
        <name>S-adenosyl-L-methionine</name>
        <dbReference type="ChEBI" id="CHEBI:59789"/>
    </ligand>
</feature>
<feature type="binding site" evidence="1">
    <location>
        <position position="121"/>
    </location>
    <ligand>
        <name>S-adenosyl-L-methionine</name>
        <dbReference type="ChEBI" id="CHEBI:59789"/>
    </ligand>
</feature>
<proteinExistence type="inferred from homology"/>
<reference key="1">
    <citation type="submission" date="2005-08" db="EMBL/GenBank/DDBJ databases">
        <title>Complete sequence of chromosome 1 of Nitrosospira multiformis ATCC 25196.</title>
        <authorList>
            <person name="Copeland A."/>
            <person name="Lucas S."/>
            <person name="Lapidus A."/>
            <person name="Barry K."/>
            <person name="Detter J.C."/>
            <person name="Glavina T."/>
            <person name="Hammon N."/>
            <person name="Israni S."/>
            <person name="Pitluck S."/>
            <person name="Chain P."/>
            <person name="Malfatti S."/>
            <person name="Shin M."/>
            <person name="Vergez L."/>
            <person name="Schmutz J."/>
            <person name="Larimer F."/>
            <person name="Land M."/>
            <person name="Hauser L."/>
            <person name="Kyrpides N."/>
            <person name="Lykidis A."/>
            <person name="Richardson P."/>
        </authorList>
    </citation>
    <scope>NUCLEOTIDE SEQUENCE [LARGE SCALE GENOMIC DNA]</scope>
    <source>
        <strain>ATCC 25196 / NCIMB 11849 / C 71</strain>
    </source>
</reference>
<comment type="function">
    <text evidence="1">Specifically methylates the uridine in position 2552 of 23S rRNA at the 2'-O position of the ribose in the fully assembled 50S ribosomal subunit.</text>
</comment>
<comment type="catalytic activity">
    <reaction evidence="1">
        <text>uridine(2552) in 23S rRNA + S-adenosyl-L-methionine = 2'-O-methyluridine(2552) in 23S rRNA + S-adenosyl-L-homocysteine + H(+)</text>
        <dbReference type="Rhea" id="RHEA:42720"/>
        <dbReference type="Rhea" id="RHEA-COMP:10202"/>
        <dbReference type="Rhea" id="RHEA-COMP:10203"/>
        <dbReference type="ChEBI" id="CHEBI:15378"/>
        <dbReference type="ChEBI" id="CHEBI:57856"/>
        <dbReference type="ChEBI" id="CHEBI:59789"/>
        <dbReference type="ChEBI" id="CHEBI:65315"/>
        <dbReference type="ChEBI" id="CHEBI:74478"/>
        <dbReference type="EC" id="2.1.1.166"/>
    </reaction>
</comment>
<comment type="subcellular location">
    <subcellularLocation>
        <location evidence="1">Cytoplasm</location>
    </subcellularLocation>
</comment>
<comment type="similarity">
    <text evidence="1">Belongs to the class I-like SAM-binding methyltransferase superfamily. RNA methyltransferase RlmE family.</text>
</comment>
<gene>
    <name evidence="1" type="primary">rlmE</name>
    <name evidence="1" type="synonym">ftsJ</name>
    <name evidence="1" type="synonym">rrmJ</name>
    <name type="ordered locus">Nmul_A0482</name>
</gene>
<sequence>MKRTKTSKAWMKEHVNDFFVRQAKKEGYRSRAAYKLMEIAERDHLFKPGMTVVDLGAAPGGWSQVAAEKLKGKGRAVALDILEMAPISGVTFIQGDFREASVLAELKEQLKDLPVDLVICDMSPNITGIRVIDQTRGMHLAELALEFCTEQLNSGGNFLVKVFQGSGFDEFFRAMRATFHRVVTRKPLASRGRSSEIYLLGLGKRD</sequence>
<evidence type="ECO:0000255" key="1">
    <source>
        <dbReference type="HAMAP-Rule" id="MF_01547"/>
    </source>
</evidence>
<accession>Q2YBT1</accession>
<organism>
    <name type="scientific">Nitrosospira multiformis (strain ATCC 25196 / NCIMB 11849 / C 71)</name>
    <dbReference type="NCBI Taxonomy" id="323848"/>
    <lineage>
        <taxon>Bacteria</taxon>
        <taxon>Pseudomonadati</taxon>
        <taxon>Pseudomonadota</taxon>
        <taxon>Betaproteobacteria</taxon>
        <taxon>Nitrosomonadales</taxon>
        <taxon>Nitrosomonadaceae</taxon>
        <taxon>Nitrosospira</taxon>
    </lineage>
</organism>
<dbReference type="EC" id="2.1.1.166" evidence="1"/>
<dbReference type="EMBL" id="CP000103">
    <property type="protein sequence ID" value="ABB73790.1"/>
    <property type="molecule type" value="Genomic_DNA"/>
</dbReference>
<dbReference type="RefSeq" id="WP_011379844.1">
    <property type="nucleotide sequence ID" value="NC_007614.1"/>
</dbReference>
<dbReference type="SMR" id="Q2YBT1"/>
<dbReference type="STRING" id="323848.Nmul_A0482"/>
<dbReference type="KEGG" id="nmu:Nmul_A0482"/>
<dbReference type="eggNOG" id="COG0293">
    <property type="taxonomic scope" value="Bacteria"/>
</dbReference>
<dbReference type="HOGENOM" id="CLU_009422_4_0_4"/>
<dbReference type="OrthoDB" id="9790080at2"/>
<dbReference type="Proteomes" id="UP000002718">
    <property type="component" value="Chromosome"/>
</dbReference>
<dbReference type="GO" id="GO:0005737">
    <property type="term" value="C:cytoplasm"/>
    <property type="evidence" value="ECO:0007669"/>
    <property type="project" value="UniProtKB-SubCell"/>
</dbReference>
<dbReference type="GO" id="GO:0008650">
    <property type="term" value="F:rRNA (uridine-2'-O-)-methyltransferase activity"/>
    <property type="evidence" value="ECO:0007669"/>
    <property type="project" value="UniProtKB-UniRule"/>
</dbReference>
<dbReference type="FunFam" id="3.40.50.150:FF:000005">
    <property type="entry name" value="Ribosomal RNA large subunit methyltransferase E"/>
    <property type="match status" value="1"/>
</dbReference>
<dbReference type="Gene3D" id="3.40.50.150">
    <property type="entry name" value="Vaccinia Virus protein VP39"/>
    <property type="match status" value="1"/>
</dbReference>
<dbReference type="HAMAP" id="MF_01547">
    <property type="entry name" value="RNA_methyltr_E"/>
    <property type="match status" value="1"/>
</dbReference>
<dbReference type="InterPro" id="IPR050082">
    <property type="entry name" value="RNA_methyltr_RlmE"/>
</dbReference>
<dbReference type="InterPro" id="IPR002877">
    <property type="entry name" value="RNA_MeTrfase_FtsJ_dom"/>
</dbReference>
<dbReference type="InterPro" id="IPR015507">
    <property type="entry name" value="rRNA-MeTfrase_E"/>
</dbReference>
<dbReference type="InterPro" id="IPR029063">
    <property type="entry name" value="SAM-dependent_MTases_sf"/>
</dbReference>
<dbReference type="NCBIfam" id="NF008390">
    <property type="entry name" value="PRK11188.1"/>
    <property type="match status" value="1"/>
</dbReference>
<dbReference type="PANTHER" id="PTHR10920">
    <property type="entry name" value="RIBOSOMAL RNA METHYLTRANSFERASE"/>
    <property type="match status" value="1"/>
</dbReference>
<dbReference type="PANTHER" id="PTHR10920:SF18">
    <property type="entry name" value="RRNA METHYLTRANSFERASE 2, MITOCHONDRIAL"/>
    <property type="match status" value="1"/>
</dbReference>
<dbReference type="Pfam" id="PF01728">
    <property type="entry name" value="FtsJ"/>
    <property type="match status" value="1"/>
</dbReference>
<dbReference type="PIRSF" id="PIRSF005461">
    <property type="entry name" value="23S_rRNA_mtase"/>
    <property type="match status" value="1"/>
</dbReference>
<dbReference type="SUPFAM" id="SSF53335">
    <property type="entry name" value="S-adenosyl-L-methionine-dependent methyltransferases"/>
    <property type="match status" value="1"/>
</dbReference>